<proteinExistence type="evidence at protein level"/>
<comment type="function">
    <text evidence="3 9 10 11 12">Involved in the protection against polyamine toxicity by regulating their concentration (PubMed:10986239, PubMed:7642535). Catalyzes the transfer of an acetyl group from acetyl coenzyme A (AcCoA) to the primary amino groups of spermidine to yield N(1)- and N(8)-acetylspermidine (PubMed:6297970, PubMed:7052085, PubMed:8077207). It can also use spermine, but not putrescine (PubMed:7052085).</text>
</comment>
<comment type="function">
    <text evidence="6">In addition, may act as a modulator of transcription through its ability to interact with the two-component response regulator RcsB. Inhibits transcription of the small RNA regulator rprA in an acetylation-independent manner. Interaction with the DNA-binding domain of RcsB might be responsible for SpeG-dependent inhibition of RcsB-dependent rprA transcription (PubMed:30562360). SpeG does not acetylate RcsB in vitro (PubMed:30562360).</text>
</comment>
<comment type="catalytic activity">
    <reaction evidence="8 10 12">
        <text>an alkane-alpha,omega-diamine + acetyl-CoA = an N-acetylalkane-alpha,omega-diamine + CoA + H(+)</text>
        <dbReference type="Rhea" id="RHEA:11116"/>
        <dbReference type="Rhea" id="RHEA-COMP:9766"/>
        <dbReference type="Rhea" id="RHEA-COMP:9767"/>
        <dbReference type="ChEBI" id="CHEBI:15378"/>
        <dbReference type="ChEBI" id="CHEBI:57287"/>
        <dbReference type="ChEBI" id="CHEBI:57288"/>
        <dbReference type="ChEBI" id="CHEBI:70977"/>
        <dbReference type="ChEBI" id="CHEBI:70988"/>
        <dbReference type="EC" id="2.3.1.57"/>
    </reaction>
</comment>
<comment type="catalytic activity">
    <reaction evidence="10 12 17">
        <text>spermidine + acetyl-CoA = N(1)-acetylspermidine + CoA + H(+)</text>
        <dbReference type="Rhea" id="RHEA:28150"/>
        <dbReference type="ChEBI" id="CHEBI:15378"/>
        <dbReference type="ChEBI" id="CHEBI:57287"/>
        <dbReference type="ChEBI" id="CHEBI:57288"/>
        <dbReference type="ChEBI" id="CHEBI:57834"/>
        <dbReference type="ChEBI" id="CHEBI:58324"/>
        <dbReference type="EC" id="2.3.1.57"/>
    </reaction>
</comment>
<comment type="catalytic activity">
    <reaction evidence="10 12 17">
        <text>spermidine + acetyl-CoA = N(8)-acetylspermidine + CoA + H(+)</text>
        <dbReference type="Rhea" id="RHEA:28270"/>
        <dbReference type="ChEBI" id="CHEBI:15378"/>
        <dbReference type="ChEBI" id="CHEBI:57287"/>
        <dbReference type="ChEBI" id="CHEBI:57288"/>
        <dbReference type="ChEBI" id="CHEBI:57834"/>
        <dbReference type="ChEBI" id="CHEBI:58535"/>
        <dbReference type="EC" id="2.3.1.57"/>
    </reaction>
</comment>
<comment type="catalytic activity">
    <reaction evidence="8 10 12">
        <text>spermine + acetyl-CoA = N(1)-acetylspermine + CoA + H(+)</text>
        <dbReference type="Rhea" id="RHEA:33099"/>
        <dbReference type="ChEBI" id="CHEBI:15378"/>
        <dbReference type="ChEBI" id="CHEBI:45725"/>
        <dbReference type="ChEBI" id="CHEBI:57287"/>
        <dbReference type="ChEBI" id="CHEBI:57288"/>
        <dbReference type="ChEBI" id="CHEBI:58101"/>
        <dbReference type="EC" id="2.3.1.57"/>
    </reaction>
</comment>
<comment type="activity regulation">
    <text evidence="4 9 12">Heat shock, alkaline shift, ethanol treatment and poor nutrient availability produce increased concentrations of monoacetylated spermidine (PubMed:2061318). Inhibited by alkaline phosphatase, N(1),N(8)-bis(ethyl)spermidine (BESPD) and N(1),N(12)-bis(ethyl)spermidine (BESPM) (PubMed:6297970, PubMed:8077207).</text>
</comment>
<comment type="biophysicochemical properties">
    <kinetics>
        <KM evidence="12">2 uM for AcCoA (in the presence of 3 mM spermidine at pH 7.5 and 37 degrees Celsius)</KM>
        <KM evidence="12">220 uM for spermine (in the presence of 10 uM AcCoA at pH 7.5 and 37 degrees Celsius)</KM>
        <KM evidence="8">183 uM for spermine</KM>
        <KM evidence="12">1290 uM for spermidine (in the presence of 10 uM AcCoA at pH 7.5 and 37 degrees Celsius)</KM>
        <KM evidence="8">328 uM for spermidine</KM>
    </kinetics>
    <temperatureDependence>
        <text evidence="3">The level of spermidine acetyltransferase activity increases at low temperature to prevent spermidine toxicity.</text>
    </temperatureDependence>
</comment>
<comment type="pathway">
    <text evidence="16 18">Amine and polyamine degradation; spermidine degradation.</text>
</comment>
<comment type="pathway">
    <text evidence="16 18">Amine and polyamine degradation; spermine degradation.</text>
</comment>
<comment type="subunit">
    <text evidence="5 6 7 12">Homododecamer (PubMed:31205017). Ligand-free SpeG forms closed symmetric dodecamers in the crystal and open asymmetric dodecamers in solution (PubMed:31205017). In the absence of ligand, also exists in solution as hexamers and tetramers, but not dimers (PubMed:23908034, PubMed:31205017, PubMed:8077207). Can interact with the DNA-binding carboxyl domain of RcsB in the presence or absence of spermidine (PubMed:30562360).</text>
</comment>
<comment type="subcellular location">
    <subcellularLocation>
        <location evidence="15">Cytoplasm</location>
    </subcellularLocation>
</comment>
<comment type="induction">
    <text evidence="4">Constitutively expressed throughout log and plateau phases of growth.</text>
</comment>
<comment type="disruption phenotype">
    <text evidence="3 11">Cells lacking this gene accumulate spermidine at late stationary phase and show a reduced cell viability due to a decrease in protein biosynthesis (PubMed:7642535). At 37 degrees Celsius, growth of mutant is normal in the presence of 0.5 or 1 mM spermidine. However, following a shift to 7 degrees Celsius, the addition of 0.5 or 1 mM spermidine results in inhibition of cellular growth or cell lysis, respectively. Furthermore, at 7 degrees Celsius, spermidine accumulation resulted in a decrease in total protein synthesis accompanied by an increase in the synthesis of the major cold shock proteins CspA, CspB, and CspG (PubMed:10986239).</text>
</comment>
<comment type="miscellaneous">
    <text evidence="12">Acetylation neutralizes the charge of the polyamine, which is then typically excreted from the cell.</text>
</comment>
<comment type="similarity">
    <text evidence="15">Belongs to the acetyltransferase family.</text>
</comment>
<accession>P0A951</accession>
<accession>P37354</accession>
<protein>
    <recommendedName>
        <fullName evidence="13">Spermidine N(1)-acetyltransferase</fullName>
        <shortName evidence="14">SAT</shortName>
        <ecNumber evidence="8 10 12">2.3.1.57</ecNumber>
    </recommendedName>
    <alternativeName>
        <fullName evidence="13">Spermidine/spermine N(1)-acetyltransferase</fullName>
        <shortName evidence="13">SSAT</shortName>
    </alternativeName>
</protein>
<reference key="1">
    <citation type="journal article" date="1994" name="J. Biol. Chem.">
        <title>Properties and structure of spermidine acetyltransferase in Escherichia coli.</title>
        <authorList>
            <person name="Fukuchi J."/>
            <person name="Kashiwagi K."/>
            <person name="Takio K."/>
            <person name="Igarashi K."/>
        </authorList>
    </citation>
    <scope>NUCLEOTIDE SEQUENCE [GENOMIC DNA]</scope>
    <scope>PARTIAL PROTEIN SEQUENCE</scope>
    <scope>FUNCTION</scope>
    <scope>CATALYTIC ACTIVITY</scope>
    <scope>BIOPHYSICOCHEMICAL PROPERTIES</scope>
    <scope>ACTIVITY REGULATION</scope>
    <scope>SUBUNIT</scope>
    <source>
        <strain>K12 / W3110 / ATCC 27325 / DSM 5911</strain>
    </source>
</reference>
<reference key="2">
    <citation type="journal article" date="1996" name="DNA Res.">
        <title>A 570-kb DNA sequence of the Escherichia coli K-12 genome corresponding to the 28.0-40.1 min region on the linkage map.</title>
        <authorList>
            <person name="Aiba H."/>
            <person name="Baba T."/>
            <person name="Fujita K."/>
            <person name="Hayashi K."/>
            <person name="Inada T."/>
            <person name="Isono K."/>
            <person name="Itoh T."/>
            <person name="Kasai H."/>
            <person name="Kashimoto K."/>
            <person name="Kimura S."/>
            <person name="Kitakawa M."/>
            <person name="Kitagawa M."/>
            <person name="Makino K."/>
            <person name="Miki T."/>
            <person name="Mizobuchi K."/>
            <person name="Mori H."/>
            <person name="Mori T."/>
            <person name="Motomura K."/>
            <person name="Nakade S."/>
            <person name="Nakamura Y."/>
            <person name="Nashimoto H."/>
            <person name="Nishio Y."/>
            <person name="Oshima T."/>
            <person name="Saito N."/>
            <person name="Sampei G."/>
            <person name="Seki Y."/>
            <person name="Sivasundaram S."/>
            <person name="Tagami H."/>
            <person name="Takeda J."/>
            <person name="Takemoto K."/>
            <person name="Takeuchi Y."/>
            <person name="Wada C."/>
            <person name="Yamamoto Y."/>
            <person name="Horiuchi T."/>
        </authorList>
    </citation>
    <scope>NUCLEOTIDE SEQUENCE [LARGE SCALE GENOMIC DNA]</scope>
    <source>
        <strain>K12 / W3110 / ATCC 27325 / DSM 5911</strain>
    </source>
</reference>
<reference key="3">
    <citation type="journal article" date="1997" name="Science">
        <title>The complete genome sequence of Escherichia coli K-12.</title>
        <authorList>
            <person name="Blattner F.R."/>
            <person name="Plunkett G. III"/>
            <person name="Bloch C.A."/>
            <person name="Perna N.T."/>
            <person name="Burland V."/>
            <person name="Riley M."/>
            <person name="Collado-Vides J."/>
            <person name="Glasner J.D."/>
            <person name="Rode C.K."/>
            <person name="Mayhew G.F."/>
            <person name="Gregor J."/>
            <person name="Davis N.W."/>
            <person name="Kirkpatrick H.A."/>
            <person name="Goeden M.A."/>
            <person name="Rose D.J."/>
            <person name="Mau B."/>
            <person name="Shao Y."/>
        </authorList>
    </citation>
    <scope>NUCLEOTIDE SEQUENCE [LARGE SCALE GENOMIC DNA]</scope>
    <source>
        <strain>K12 / MG1655 / ATCC 47076</strain>
    </source>
</reference>
<reference key="4">
    <citation type="journal article" date="2006" name="Mol. Syst. Biol.">
        <title>Highly accurate genome sequences of Escherichia coli K-12 strains MG1655 and W3110.</title>
        <authorList>
            <person name="Hayashi K."/>
            <person name="Morooka N."/>
            <person name="Yamamoto Y."/>
            <person name="Fujita K."/>
            <person name="Isono K."/>
            <person name="Choi S."/>
            <person name="Ohtsubo E."/>
            <person name="Baba T."/>
            <person name="Wanner B.L."/>
            <person name="Mori H."/>
            <person name="Horiuchi T."/>
        </authorList>
    </citation>
    <scope>NUCLEOTIDE SEQUENCE [LARGE SCALE GENOMIC DNA]</scope>
    <source>
        <strain>K12 / W3110 / ATCC 27325 / DSM 5911</strain>
    </source>
</reference>
<reference key="5">
    <citation type="journal article" date="1982" name="Biochem. Biophys. Res. Commun.">
        <title>Occurrence and induction of spermidine-N1-acetyltransferase in Escherichia coli.</title>
        <authorList>
            <person name="Matsui I."/>
            <person name="Kamei M."/>
            <person name="Otani S."/>
            <person name="Morisawa S."/>
            <person name="Pegg A.E."/>
        </authorList>
    </citation>
    <scope>FUNCTION</scope>
    <scope>CATALYTIC ACTIVITY</scope>
    <scope>SUBSTRATE SPECIFICITY</scope>
</reference>
<reference key="6">
    <citation type="journal article" date="1982" name="FEBS Lett.">
        <title>Inactivation of spermidine N1-acetyltransferase with alkaline phosphatase.</title>
        <authorList>
            <person name="Matsui I."/>
            <person name="Otani S."/>
            <person name="Kamei M."/>
            <person name="Morisawa S."/>
        </authorList>
    </citation>
    <scope>FUNCTION</scope>
    <scope>ACTIVITY REGULATION</scope>
</reference>
<reference key="7">
    <citation type="journal article" date="1991" name="J. Biol. Chem.">
        <title>Spermidine acetylation in response to a variety of stresses in Escherichia coli.</title>
        <authorList>
            <person name="Carper S.W."/>
            <person name="Willis D.G."/>
            <person name="Manning K.A."/>
            <person name="Gerner E.W."/>
        </authorList>
    </citation>
    <scope>ACTIVITY REGULATION</scope>
    <scope>INDUCTION</scope>
    <source>
        <strain>K12</strain>
    </source>
</reference>
<reference key="8">
    <citation type="journal article" date="1995" name="J. Biol. Chem.">
        <title>Decrease in cell viability due to the accumulation of spermidine in spermidine acetyltransferase-deficient mutant of Escherichia coli.</title>
        <authorList>
            <person name="Fukuchi J."/>
            <person name="Kashiwagi K."/>
            <person name="Yamagishi M."/>
            <person name="Ishihama A."/>
            <person name="Igarashi K."/>
        </authorList>
    </citation>
    <scope>FUNCTION</scope>
    <scope>DISRUPTION PHENOTYPE</scope>
    <scope>PATHWAY</scope>
    <source>
        <strain>K12 / C600 / CR34 / ATCC 23724 / DSM 3925 / LMG 3041 / NCIB 10222</strain>
    </source>
</reference>
<reference key="9">
    <citation type="journal article" date="2000" name="J. Bacteriol.">
        <title>Spermidine acetyltransferase is required to prevent spermidine toxicity at low temperatures in Escherichia coli.</title>
        <authorList>
            <person name="Limsuwun K."/>
            <person name="Jones P.G."/>
        </authorList>
    </citation>
    <scope>FUNCTION</scope>
    <scope>BIOPHYSICOCHEMICAL PROPERTIES</scope>
    <scope>DISRUPTION PHENOTYPE</scope>
    <scope>PATHWAY</scope>
    <source>
        <strain>K12 / C600 / CR34 / ATCC 23724 / DSM 3925 / LMG 3041 / NCIB 10222</strain>
    </source>
</reference>
<reference key="10">
    <citation type="journal article" date="2018" name="PLoS ONE">
        <title>The spermidine acetyltransferase SpeG regulates transcription of the small RNA rprA.</title>
        <authorList>
            <person name="Hu L.I."/>
            <person name="Filippova E.V."/>
            <person name="Dang J."/>
            <person name="Pshenychnyi S."/>
            <person name="Ruan J."/>
            <person name="Kiryukhina O."/>
            <person name="Anderson W.F."/>
            <person name="Kuhn M.L."/>
            <person name="Wolfe A.J."/>
        </authorList>
    </citation>
    <scope>FUNCTION IN TRANSCRIPTION REGULATION</scope>
    <scope>INTERACTION WITH RCSB</scope>
    <scope>MUTAGENESIS OF TYR-135</scope>
</reference>
<reference key="11">
    <citation type="journal article" date="2021" name="Protein Sci.">
        <title>Criticality of a conserved tyrosine residue in the SpeG protein from Escherichia coli.</title>
        <authorList>
            <person name="Le V.T.B."/>
            <person name="Dang J."/>
            <person name="Lim E.Q."/>
            <person name="Kuhn M.L."/>
        </authorList>
    </citation>
    <scope>CATALYTIC ACTIVITY</scope>
    <scope>BIOPHYSICOCHEMICAL PROPERTIES</scope>
    <scope>ACTIVE SITE</scope>
    <scope>MUTAGENESIS OF TYR-135</scope>
</reference>
<reference key="12">
    <citation type="journal article" date="2013" name="Acta Crystallogr. F">
        <title>Expression, purification, crystallization and preliminary crystallographic analysis of spermidine acetyltransferase from Escherichia coli.</title>
        <authorList>
            <person name="Niiyama M."/>
            <person name="Sugiyama S."/>
            <person name="Hirose M."/>
            <person name="Ishikawa S."/>
            <person name="Tomitori H."/>
            <person name="Higashi K."/>
            <person name="Yamashita T."/>
            <person name="Adachi H."/>
            <person name="Takano K."/>
            <person name="Murakami S."/>
            <person name="Murata M."/>
            <person name="Inoue T."/>
            <person name="Mori Y."/>
            <person name="Kashiwagi K."/>
            <person name="Matsumura H."/>
            <person name="Igarashi K."/>
        </authorList>
    </citation>
    <scope>CRYSTALLIZATION</scope>
    <scope>SUBUNIT</scope>
    <source>
        <strain>K12</strain>
    </source>
</reference>
<reference evidence="19 20" key="13">
    <citation type="journal article" date="2019" name="Acta Crystallogr. D">
        <title>Analysis of crystalline and solution states of ligand-free spermidine N-acetyltransferase (SpeG) from Escherichia coli.</title>
        <authorList>
            <person name="Filippova E.V."/>
            <person name="Weigand S."/>
            <person name="Kiryukhina O."/>
            <person name="Wolfe A.J."/>
            <person name="Anderson W.F."/>
        </authorList>
    </citation>
    <scope>X-RAY CRYSTALLOGRAPHY (1.75 ANGSTROMS) IN COMPLEX WITH MAGNESIUM</scope>
    <scope>SUBUNIT</scope>
    <source>
        <strain>K12 / MG1655 / ATCC 47076</strain>
    </source>
</reference>
<feature type="initiator methionine" description="Removed" evidence="12">
    <location>
        <position position="1"/>
    </location>
</feature>
<feature type="chain" id="PRO_0000074588" description="Spermidine N(1)-acetyltransferase">
    <location>
        <begin position="2"/>
        <end position="186"/>
    </location>
</feature>
<feature type="domain" description="N-acetyltransferase" evidence="2">
    <location>
        <begin position="7"/>
        <end position="167"/>
    </location>
</feature>
<feature type="active site" description="Proton donor" evidence="17">
    <location>
        <position position="135"/>
    </location>
</feature>
<feature type="binding site" evidence="1">
    <location>
        <position position="30"/>
    </location>
    <ligand>
        <name>spermine</name>
        <dbReference type="ChEBI" id="CHEBI:45725"/>
    </ligand>
</feature>
<feature type="binding site" evidence="7 19">
    <location>
        <position position="35"/>
    </location>
    <ligand>
        <name>Mg(2+)</name>
        <dbReference type="ChEBI" id="CHEBI:18420"/>
    </ligand>
</feature>
<feature type="binding site" evidence="1">
    <location>
        <position position="35"/>
    </location>
    <ligand>
        <name>spermidine</name>
        <dbReference type="ChEBI" id="CHEBI:57834"/>
    </ligand>
</feature>
<feature type="binding site" evidence="1">
    <location>
        <position position="35"/>
    </location>
    <ligand>
        <name>spermine</name>
        <dbReference type="ChEBI" id="CHEBI:45725"/>
    </ligand>
</feature>
<feature type="binding site" evidence="1">
    <location>
        <position position="43"/>
    </location>
    <ligand>
        <name>spermidine</name>
        <dbReference type="ChEBI" id="CHEBI:57834"/>
    </ligand>
</feature>
<feature type="binding site" evidence="1">
    <location>
        <position position="43"/>
    </location>
    <ligand>
        <name>spermine</name>
        <dbReference type="ChEBI" id="CHEBI:45725"/>
    </ligand>
</feature>
<feature type="binding site" evidence="1">
    <location>
        <begin position="51"/>
        <end position="54"/>
    </location>
    <ligand>
        <name>spermine</name>
        <dbReference type="ChEBI" id="CHEBI:45725"/>
    </ligand>
</feature>
<feature type="binding site" evidence="7 19">
    <location>
        <position position="76"/>
    </location>
    <ligand>
        <name>Mg(2+)</name>
        <dbReference type="ChEBI" id="CHEBI:18420"/>
    </ligand>
</feature>
<feature type="binding site" evidence="1">
    <location>
        <begin position="85"/>
        <end position="87"/>
    </location>
    <ligand>
        <name>spermine</name>
        <dbReference type="ChEBI" id="CHEBI:45725"/>
    </ligand>
</feature>
<feature type="binding site" evidence="1">
    <location>
        <begin position="88"/>
        <end position="90"/>
    </location>
    <ligand>
        <name>acetyl-CoA</name>
        <dbReference type="ChEBI" id="CHEBI:57288"/>
    </ligand>
</feature>
<feature type="binding site" evidence="1">
    <location>
        <begin position="95"/>
        <end position="101"/>
    </location>
    <ligand>
        <name>acetyl-CoA</name>
        <dbReference type="ChEBI" id="CHEBI:57288"/>
    </ligand>
</feature>
<feature type="binding site" evidence="1">
    <location>
        <begin position="128"/>
        <end position="137"/>
    </location>
    <ligand>
        <name>acetyl-CoA</name>
        <dbReference type="ChEBI" id="CHEBI:57288"/>
    </ligand>
</feature>
<feature type="site" description="Could be important for selectivity toward long polyamines" evidence="1">
    <location>
        <position position="85"/>
    </location>
</feature>
<feature type="mutagenesis site" description="300-fold decrease in activity with spermine as substrate. Retains the ability to inhibit PrprA activity." evidence="6 8">
    <original>Y</original>
    <variation>A</variation>
    <location>
        <position position="135"/>
    </location>
</feature>
<feature type="mutagenesis site" description="100-fold decrease in activity with spermine as substrate." evidence="8">
    <original>Y</original>
    <variation>C</variation>
    <variation>F</variation>
    <location>
        <position position="135"/>
    </location>
</feature>
<feature type="mutagenesis site" description="Loss of activity with spermine as substrate." evidence="8">
    <original>Y</original>
    <variation>S</variation>
    <location>
        <position position="135"/>
    </location>
</feature>
<feature type="strand" evidence="21">
    <location>
        <begin position="7"/>
        <end position="11"/>
    </location>
</feature>
<feature type="helix" evidence="21">
    <location>
        <begin position="14"/>
        <end position="16"/>
    </location>
</feature>
<feature type="helix" evidence="21">
    <location>
        <begin position="17"/>
        <end position="22"/>
    </location>
</feature>
<feature type="helix" evidence="21">
    <location>
        <begin position="26"/>
        <end position="29"/>
    </location>
</feature>
<feature type="turn" evidence="21">
    <location>
        <begin position="31"/>
        <end position="33"/>
    </location>
</feature>
<feature type="strand" evidence="21">
    <location>
        <begin position="35"/>
        <end position="38"/>
    </location>
</feature>
<feature type="helix" evidence="21">
    <location>
        <begin position="41"/>
        <end position="50"/>
    </location>
</feature>
<feature type="turn" evidence="21">
    <location>
        <begin position="51"/>
        <end position="53"/>
    </location>
</feature>
<feature type="strand" evidence="21">
    <location>
        <begin position="58"/>
        <end position="64"/>
    </location>
</feature>
<feature type="strand" evidence="21">
    <location>
        <begin position="67"/>
        <end position="78"/>
    </location>
</feature>
<feature type="turn" evidence="21">
    <location>
        <begin position="79"/>
        <end position="82"/>
    </location>
</feature>
<feature type="strand" evidence="21">
    <location>
        <begin position="83"/>
        <end position="90"/>
    </location>
</feature>
<feature type="helix" evidence="21">
    <location>
        <begin position="92"/>
        <end position="94"/>
    </location>
</feature>
<feature type="turn" evidence="21">
    <location>
        <begin position="95"/>
        <end position="98"/>
    </location>
</feature>
<feature type="helix" evidence="21">
    <location>
        <begin position="99"/>
        <end position="113"/>
    </location>
</feature>
<feature type="strand" evidence="21">
    <location>
        <begin position="118"/>
        <end position="125"/>
    </location>
</feature>
<feature type="helix" evidence="21">
    <location>
        <begin position="129"/>
        <end position="137"/>
    </location>
</feature>
<feature type="strand" evidence="21">
    <location>
        <begin position="141"/>
        <end position="152"/>
    </location>
</feature>
<feature type="strand" evidence="21">
    <location>
        <begin position="155"/>
        <end position="165"/>
    </location>
</feature>
<feature type="helix" evidence="21">
    <location>
        <begin position="166"/>
        <end position="172"/>
    </location>
</feature>
<gene>
    <name type="primary">speG</name>
    <name type="ordered locus">b1584</name>
    <name type="ordered locus">JW1576</name>
</gene>
<sequence length="186" mass="21887">MPSAHSVKLRPLEREDLRYVHQLDNNASVMRYWFEEPYEAFVELSDLYDKHIHDQSERRFVVECDGEKAGLVELVEINHVHRRAEFQIIISPEYQGKGLATRAAKLAMDYGFTVLNLYKLYLIVDKENEKAIHIYRKLGFSVEGELMHEFFINGQYRNAIRMCIFQHQYLAEHKTPGQTLLKPTAQ</sequence>
<evidence type="ECO:0000250" key="1">
    <source>
        <dbReference type="UniProtKB" id="Q9KL03"/>
    </source>
</evidence>
<evidence type="ECO:0000255" key="2">
    <source>
        <dbReference type="PROSITE-ProRule" id="PRU00532"/>
    </source>
</evidence>
<evidence type="ECO:0000269" key="3">
    <source>
    </source>
</evidence>
<evidence type="ECO:0000269" key="4">
    <source>
    </source>
</evidence>
<evidence type="ECO:0000269" key="5">
    <source>
    </source>
</evidence>
<evidence type="ECO:0000269" key="6">
    <source>
    </source>
</evidence>
<evidence type="ECO:0000269" key="7">
    <source>
    </source>
</evidence>
<evidence type="ECO:0000269" key="8">
    <source>
    </source>
</evidence>
<evidence type="ECO:0000269" key="9">
    <source>
    </source>
</evidence>
<evidence type="ECO:0000269" key="10">
    <source>
    </source>
</evidence>
<evidence type="ECO:0000269" key="11">
    <source>
    </source>
</evidence>
<evidence type="ECO:0000269" key="12">
    <source>
    </source>
</evidence>
<evidence type="ECO:0000303" key="13">
    <source>
    </source>
</evidence>
<evidence type="ECO:0000303" key="14">
    <source>
    </source>
</evidence>
<evidence type="ECO:0000305" key="15"/>
<evidence type="ECO:0000305" key="16">
    <source>
    </source>
</evidence>
<evidence type="ECO:0000305" key="17">
    <source>
    </source>
</evidence>
<evidence type="ECO:0000305" key="18">
    <source>
    </source>
</evidence>
<evidence type="ECO:0007744" key="19">
    <source>
        <dbReference type="PDB" id="4R9M"/>
    </source>
</evidence>
<evidence type="ECO:0007744" key="20">
    <source>
        <dbReference type="PDB" id="6CY6"/>
    </source>
</evidence>
<evidence type="ECO:0007829" key="21">
    <source>
        <dbReference type="PDB" id="6CY6"/>
    </source>
</evidence>
<name>ATDA_ECOLI</name>
<organism>
    <name type="scientific">Escherichia coli (strain K12)</name>
    <dbReference type="NCBI Taxonomy" id="83333"/>
    <lineage>
        <taxon>Bacteria</taxon>
        <taxon>Pseudomonadati</taxon>
        <taxon>Pseudomonadota</taxon>
        <taxon>Gammaproteobacteria</taxon>
        <taxon>Enterobacterales</taxon>
        <taxon>Enterobacteriaceae</taxon>
        <taxon>Escherichia</taxon>
    </lineage>
</organism>
<keyword id="KW-0002">3D-structure</keyword>
<keyword id="KW-0012">Acyltransferase</keyword>
<keyword id="KW-0963">Cytoplasm</keyword>
<keyword id="KW-0903">Direct protein sequencing</keyword>
<keyword id="KW-0460">Magnesium</keyword>
<keyword id="KW-0479">Metal-binding</keyword>
<keyword id="KW-1185">Reference proteome</keyword>
<keyword id="KW-0808">Transferase</keyword>
<dbReference type="EC" id="2.3.1.57" evidence="8 10 12"/>
<dbReference type="EMBL" id="D25276">
    <property type="protein sequence ID" value="BAA04966.1"/>
    <property type="molecule type" value="Genomic_DNA"/>
</dbReference>
<dbReference type="EMBL" id="U00096">
    <property type="protein sequence ID" value="AAC74656.1"/>
    <property type="molecule type" value="Genomic_DNA"/>
</dbReference>
<dbReference type="EMBL" id="AP009048">
    <property type="protein sequence ID" value="BAA15286.2"/>
    <property type="molecule type" value="Genomic_DNA"/>
</dbReference>
<dbReference type="PIR" id="A55345">
    <property type="entry name" value="A55345"/>
</dbReference>
<dbReference type="RefSeq" id="NP_416101.1">
    <property type="nucleotide sequence ID" value="NC_000913.3"/>
</dbReference>
<dbReference type="RefSeq" id="WP_001138581.1">
    <property type="nucleotide sequence ID" value="NZ_STEB01000003.1"/>
</dbReference>
<dbReference type="PDB" id="4R9M">
    <property type="method" value="X-ray"/>
    <property type="resolution" value="2.90 A"/>
    <property type="chains" value="A/B/C=1-186"/>
</dbReference>
<dbReference type="PDB" id="6CY6">
    <property type="method" value="X-ray"/>
    <property type="resolution" value="1.75 A"/>
    <property type="chains" value="A=1-186"/>
</dbReference>
<dbReference type="PDBsum" id="4R9M"/>
<dbReference type="PDBsum" id="6CY6"/>
<dbReference type="SMR" id="P0A951"/>
<dbReference type="BioGRID" id="4260234">
    <property type="interactions" value="18"/>
</dbReference>
<dbReference type="BioGRID" id="850477">
    <property type="interactions" value="1"/>
</dbReference>
<dbReference type="ComplexPortal" id="CPX-2133">
    <property type="entry name" value="Spermidine N(1)-acetyltransferase complex"/>
</dbReference>
<dbReference type="FunCoup" id="P0A951">
    <property type="interactions" value="133"/>
</dbReference>
<dbReference type="IntAct" id="P0A951">
    <property type="interactions" value="11"/>
</dbReference>
<dbReference type="STRING" id="511145.b1584"/>
<dbReference type="jPOST" id="P0A951"/>
<dbReference type="PaxDb" id="511145-b1584"/>
<dbReference type="EnsemblBacteria" id="AAC74656">
    <property type="protein sequence ID" value="AAC74656"/>
    <property type="gene ID" value="b1584"/>
</dbReference>
<dbReference type="GeneID" id="75204427"/>
<dbReference type="GeneID" id="946117"/>
<dbReference type="KEGG" id="ecj:JW1576"/>
<dbReference type="KEGG" id="eco:b1584"/>
<dbReference type="KEGG" id="ecoc:C3026_09130"/>
<dbReference type="PATRIC" id="fig|1411691.4.peg.678"/>
<dbReference type="EchoBASE" id="EB2341"/>
<dbReference type="eggNOG" id="COG1670">
    <property type="taxonomic scope" value="Bacteria"/>
</dbReference>
<dbReference type="InParanoid" id="P0A951"/>
<dbReference type="OMA" id="AAIHIYK"/>
<dbReference type="OrthoDB" id="9795206at2"/>
<dbReference type="PhylomeDB" id="P0A951"/>
<dbReference type="BioCyc" id="EcoCyc:SPERMACTRAN-MONOMER"/>
<dbReference type="BioCyc" id="MetaCyc:SPERMACTRAN-MONOMER"/>
<dbReference type="BRENDA" id="2.3.1.57">
    <property type="organism ID" value="2026"/>
</dbReference>
<dbReference type="UniPathway" id="UPA00211"/>
<dbReference type="UniPathway" id="UPA00250"/>
<dbReference type="EvolutionaryTrace" id="P0A951"/>
<dbReference type="PRO" id="PR:P0A951"/>
<dbReference type="Proteomes" id="UP000000625">
    <property type="component" value="Chromosome"/>
</dbReference>
<dbReference type="GO" id="GO:1990235">
    <property type="term" value="C:diamine N-acetyltransferase complex"/>
    <property type="evidence" value="ECO:0000353"/>
    <property type="project" value="ComplexPortal"/>
</dbReference>
<dbReference type="GO" id="GO:0032991">
    <property type="term" value="C:protein-containing complex"/>
    <property type="evidence" value="ECO:0000353"/>
    <property type="project" value="EcoCyc"/>
</dbReference>
<dbReference type="GO" id="GO:0004145">
    <property type="term" value="F:diamine N-acetyltransferase activity"/>
    <property type="evidence" value="ECO:0000314"/>
    <property type="project" value="UniProtKB"/>
</dbReference>
<dbReference type="GO" id="GO:0042802">
    <property type="term" value="F:identical protein binding"/>
    <property type="evidence" value="ECO:0000353"/>
    <property type="project" value="EcoCyc"/>
</dbReference>
<dbReference type="GO" id="GO:0000287">
    <property type="term" value="F:magnesium ion binding"/>
    <property type="evidence" value="ECO:0000314"/>
    <property type="project" value="UniProtKB"/>
</dbReference>
<dbReference type="GO" id="GO:0015936">
    <property type="term" value="P:coenzyme A metabolic process"/>
    <property type="evidence" value="ECO:0000314"/>
    <property type="project" value="ComplexPortal"/>
</dbReference>
<dbReference type="GO" id="GO:0006598">
    <property type="term" value="P:polyamine catabolic process"/>
    <property type="evidence" value="ECO:0000315"/>
    <property type="project" value="UniProtKB"/>
</dbReference>
<dbReference type="GO" id="GO:0046203">
    <property type="term" value="P:spermidine catabolic process"/>
    <property type="evidence" value="ECO:0007669"/>
    <property type="project" value="UniProtKB-UniPathway"/>
</dbReference>
<dbReference type="GO" id="GO:0046208">
    <property type="term" value="P:spermine catabolic process"/>
    <property type="evidence" value="ECO:0007669"/>
    <property type="project" value="UniProtKB-UniPathway"/>
</dbReference>
<dbReference type="CDD" id="cd04301">
    <property type="entry name" value="NAT_SF"/>
    <property type="match status" value="1"/>
</dbReference>
<dbReference type="FunFam" id="3.40.630.30:FF:000007">
    <property type="entry name" value="Spermidine N(1)-acetyltransferase"/>
    <property type="match status" value="1"/>
</dbReference>
<dbReference type="Gene3D" id="3.40.630.30">
    <property type="match status" value="1"/>
</dbReference>
<dbReference type="InterPro" id="IPR016181">
    <property type="entry name" value="Acyl_CoA_acyltransferase"/>
</dbReference>
<dbReference type="InterPro" id="IPR000182">
    <property type="entry name" value="GNAT_dom"/>
</dbReference>
<dbReference type="NCBIfam" id="NF011709">
    <property type="entry name" value="PRK15130.1"/>
    <property type="match status" value="1"/>
</dbReference>
<dbReference type="PANTHER" id="PTHR43415">
    <property type="entry name" value="SPERMIDINE N(1)-ACETYLTRANSFERASE"/>
    <property type="match status" value="1"/>
</dbReference>
<dbReference type="PANTHER" id="PTHR43415:SF6">
    <property type="entry name" value="SPERMIDINE N(1)-ACETYLTRANSFERASE"/>
    <property type="match status" value="1"/>
</dbReference>
<dbReference type="Pfam" id="PF13302">
    <property type="entry name" value="Acetyltransf_3"/>
    <property type="match status" value="1"/>
</dbReference>
<dbReference type="SUPFAM" id="SSF55729">
    <property type="entry name" value="Acyl-CoA N-acyltransferases (Nat)"/>
    <property type="match status" value="1"/>
</dbReference>
<dbReference type="PROSITE" id="PS51186">
    <property type="entry name" value="GNAT"/>
    <property type="match status" value="1"/>
</dbReference>